<organism>
    <name type="scientific">Streptococcus constellatus</name>
    <dbReference type="NCBI Taxonomy" id="76860"/>
    <lineage>
        <taxon>Bacteria</taxon>
        <taxon>Bacillati</taxon>
        <taxon>Bacillota</taxon>
        <taxon>Bacilli</taxon>
        <taxon>Lactobacillales</taxon>
        <taxon>Streptococcaceae</taxon>
        <taxon>Streptococcus</taxon>
        <taxon>Streptococcus anginosus group</taxon>
    </lineage>
</organism>
<gene>
    <name evidence="1" type="primary">groES</name>
    <name evidence="1" type="synonym">groS</name>
</gene>
<proteinExistence type="inferred from homology"/>
<keyword id="KW-0143">Chaperone</keyword>
<keyword id="KW-0963">Cytoplasm</keyword>
<comment type="function">
    <text evidence="1">Together with the chaperonin GroEL, plays an essential role in assisting protein folding. The GroEL-GroES system forms a nano-cage that allows encapsulation of the non-native substrate proteins and provides a physical environment optimized to promote and accelerate protein folding. GroES binds to the apical surface of the GroEL ring, thereby capping the opening of the GroEL channel.</text>
</comment>
<comment type="subunit">
    <text evidence="1">Heptamer of 7 subunits arranged in a ring. Interacts with the chaperonin GroEL.</text>
</comment>
<comment type="subcellular location">
    <subcellularLocation>
        <location evidence="1">Cytoplasm</location>
    </subcellularLocation>
</comment>
<comment type="similarity">
    <text evidence="1">Belongs to the GroES chaperonin family.</text>
</comment>
<feature type="chain" id="PRO_0000174859" description="Co-chaperonin GroES">
    <location>
        <begin position="1"/>
        <end position="93"/>
    </location>
</feature>
<protein>
    <recommendedName>
        <fullName evidence="1">Co-chaperonin GroES</fullName>
    </recommendedName>
    <alternativeName>
        <fullName evidence="1">10 kDa chaperonin</fullName>
    </alternativeName>
    <alternativeName>
        <fullName evidence="1">Chaperonin-10</fullName>
        <shortName evidence="1">Cpn10</shortName>
    </alternativeName>
</protein>
<reference key="1">
    <citation type="journal article" date="2002" name="J. Clin. Microbiol.">
        <title>groESL sequence determination, phylogenetic analysis, and species differentiation for viridans group streptococci.</title>
        <authorList>
            <person name="Teng L.-J."/>
            <person name="Hsueh P.R."/>
            <person name="Tsai J.C."/>
            <person name="Chen P.-W."/>
            <person name="Hsu J.-C."/>
            <person name="Lai H.C."/>
            <person name="Lee C.N."/>
            <person name="Ho S.W."/>
        </authorList>
    </citation>
    <scope>NUCLEOTIDE SEQUENCE [GENOMIC DNA]</scope>
</reference>
<accession>Q8KJ19</accession>
<name>CH10_STRCV</name>
<dbReference type="EMBL" id="AF378196">
    <property type="protein sequence ID" value="AAM46145.1"/>
    <property type="molecule type" value="Genomic_DNA"/>
</dbReference>
<dbReference type="RefSeq" id="WP_003070727.1">
    <property type="nucleotide sequence ID" value="NZ_UHFC01000002.1"/>
</dbReference>
<dbReference type="SMR" id="Q8KJ19"/>
<dbReference type="STRING" id="862969.SCI_1690"/>
<dbReference type="GeneID" id="93847725"/>
<dbReference type="eggNOG" id="COG0234">
    <property type="taxonomic scope" value="Bacteria"/>
</dbReference>
<dbReference type="OrthoDB" id="9806791at2"/>
<dbReference type="GO" id="GO:0005737">
    <property type="term" value="C:cytoplasm"/>
    <property type="evidence" value="ECO:0007669"/>
    <property type="project" value="UniProtKB-SubCell"/>
</dbReference>
<dbReference type="GO" id="GO:0005524">
    <property type="term" value="F:ATP binding"/>
    <property type="evidence" value="ECO:0007669"/>
    <property type="project" value="InterPro"/>
</dbReference>
<dbReference type="GO" id="GO:0046872">
    <property type="term" value="F:metal ion binding"/>
    <property type="evidence" value="ECO:0007669"/>
    <property type="project" value="TreeGrafter"/>
</dbReference>
<dbReference type="GO" id="GO:0044183">
    <property type="term" value="F:protein folding chaperone"/>
    <property type="evidence" value="ECO:0007669"/>
    <property type="project" value="InterPro"/>
</dbReference>
<dbReference type="GO" id="GO:0051087">
    <property type="term" value="F:protein-folding chaperone binding"/>
    <property type="evidence" value="ECO:0007669"/>
    <property type="project" value="TreeGrafter"/>
</dbReference>
<dbReference type="GO" id="GO:0051082">
    <property type="term" value="F:unfolded protein binding"/>
    <property type="evidence" value="ECO:0007669"/>
    <property type="project" value="TreeGrafter"/>
</dbReference>
<dbReference type="GO" id="GO:0051085">
    <property type="term" value="P:chaperone cofactor-dependent protein refolding"/>
    <property type="evidence" value="ECO:0007669"/>
    <property type="project" value="TreeGrafter"/>
</dbReference>
<dbReference type="CDD" id="cd00320">
    <property type="entry name" value="cpn10"/>
    <property type="match status" value="1"/>
</dbReference>
<dbReference type="FunFam" id="2.30.33.40:FF:000007">
    <property type="entry name" value="10 kDa chaperonin"/>
    <property type="match status" value="1"/>
</dbReference>
<dbReference type="Gene3D" id="2.30.33.40">
    <property type="entry name" value="GroES chaperonin"/>
    <property type="match status" value="1"/>
</dbReference>
<dbReference type="HAMAP" id="MF_00580">
    <property type="entry name" value="CH10"/>
    <property type="match status" value="1"/>
</dbReference>
<dbReference type="InterPro" id="IPR020818">
    <property type="entry name" value="Chaperonin_GroES"/>
</dbReference>
<dbReference type="InterPro" id="IPR037124">
    <property type="entry name" value="Chaperonin_GroES_sf"/>
</dbReference>
<dbReference type="InterPro" id="IPR018369">
    <property type="entry name" value="Chaprnonin_Cpn10_CS"/>
</dbReference>
<dbReference type="InterPro" id="IPR011032">
    <property type="entry name" value="GroES-like_sf"/>
</dbReference>
<dbReference type="NCBIfam" id="NF001528">
    <property type="entry name" value="PRK00364.1-4"/>
    <property type="match status" value="1"/>
</dbReference>
<dbReference type="PANTHER" id="PTHR10772">
    <property type="entry name" value="10 KDA HEAT SHOCK PROTEIN"/>
    <property type="match status" value="1"/>
</dbReference>
<dbReference type="PANTHER" id="PTHR10772:SF58">
    <property type="entry name" value="CO-CHAPERONIN GROES"/>
    <property type="match status" value="1"/>
</dbReference>
<dbReference type="Pfam" id="PF00166">
    <property type="entry name" value="Cpn10"/>
    <property type="match status" value="1"/>
</dbReference>
<dbReference type="PRINTS" id="PR00297">
    <property type="entry name" value="CHAPERONIN10"/>
</dbReference>
<dbReference type="SMART" id="SM00883">
    <property type="entry name" value="Cpn10"/>
    <property type="match status" value="1"/>
</dbReference>
<dbReference type="SUPFAM" id="SSF50129">
    <property type="entry name" value="GroES-like"/>
    <property type="match status" value="1"/>
</dbReference>
<dbReference type="PROSITE" id="PS00681">
    <property type="entry name" value="CHAPERONINS_CPN10"/>
    <property type="match status" value="1"/>
</dbReference>
<evidence type="ECO:0000255" key="1">
    <source>
        <dbReference type="HAMAP-Rule" id="MF_00580"/>
    </source>
</evidence>
<sequence>MLKPLGDRVVLKVEEREQKVGGFVIAGAGQDATKTAKVIAVGEGIRTLNGELVAPSVKADDTVLVESHAGIEVKDGEEKYLVVNETNILAIVE</sequence>